<evidence type="ECO:0000255" key="1">
    <source>
        <dbReference type="HAMAP-Rule" id="MF_00254"/>
    </source>
</evidence>
<comment type="catalytic activity">
    <reaction evidence="1">
        <text>tRNA(Gly) + glycine + ATP = glycyl-tRNA(Gly) + AMP + diphosphate</text>
        <dbReference type="Rhea" id="RHEA:16013"/>
        <dbReference type="Rhea" id="RHEA-COMP:9664"/>
        <dbReference type="Rhea" id="RHEA-COMP:9683"/>
        <dbReference type="ChEBI" id="CHEBI:30616"/>
        <dbReference type="ChEBI" id="CHEBI:33019"/>
        <dbReference type="ChEBI" id="CHEBI:57305"/>
        <dbReference type="ChEBI" id="CHEBI:78442"/>
        <dbReference type="ChEBI" id="CHEBI:78522"/>
        <dbReference type="ChEBI" id="CHEBI:456215"/>
        <dbReference type="EC" id="6.1.1.14"/>
    </reaction>
</comment>
<comment type="subunit">
    <text evidence="1">Tetramer of two alpha and two beta subunits.</text>
</comment>
<comment type="subcellular location">
    <subcellularLocation>
        <location evidence="1">Cytoplasm</location>
    </subcellularLocation>
</comment>
<comment type="similarity">
    <text evidence="1">Belongs to the class-II aminoacyl-tRNA synthetase family.</text>
</comment>
<feature type="chain" id="PRO_1000047508" description="Glycine--tRNA ligase alpha subunit">
    <location>
        <begin position="1"/>
        <end position="305"/>
    </location>
</feature>
<accession>A4VX92</accession>
<reference key="1">
    <citation type="journal article" date="2007" name="PLoS ONE">
        <title>A glimpse of streptococcal toxic shock syndrome from comparative genomics of S. suis 2 Chinese isolates.</title>
        <authorList>
            <person name="Chen C."/>
            <person name="Tang J."/>
            <person name="Dong W."/>
            <person name="Wang C."/>
            <person name="Feng Y."/>
            <person name="Wang J."/>
            <person name="Zheng F."/>
            <person name="Pan X."/>
            <person name="Liu D."/>
            <person name="Li M."/>
            <person name="Song Y."/>
            <person name="Zhu X."/>
            <person name="Sun H."/>
            <person name="Feng T."/>
            <person name="Guo Z."/>
            <person name="Ju A."/>
            <person name="Ge J."/>
            <person name="Dong Y."/>
            <person name="Sun W."/>
            <person name="Jiang Y."/>
            <person name="Wang J."/>
            <person name="Yan J."/>
            <person name="Yang H."/>
            <person name="Wang X."/>
            <person name="Gao G.F."/>
            <person name="Yang R."/>
            <person name="Wang J."/>
            <person name="Yu J."/>
        </authorList>
    </citation>
    <scope>NUCLEOTIDE SEQUENCE [LARGE SCALE GENOMIC DNA]</scope>
    <source>
        <strain>05ZYH33</strain>
    </source>
</reference>
<organism>
    <name type="scientific">Streptococcus suis (strain 05ZYH33)</name>
    <dbReference type="NCBI Taxonomy" id="391295"/>
    <lineage>
        <taxon>Bacteria</taxon>
        <taxon>Bacillati</taxon>
        <taxon>Bacillota</taxon>
        <taxon>Bacilli</taxon>
        <taxon>Lactobacillales</taxon>
        <taxon>Streptococcaceae</taxon>
        <taxon>Streptococcus</taxon>
    </lineage>
</organism>
<name>SYGA_STRSY</name>
<proteinExistence type="inferred from homology"/>
<keyword id="KW-0030">Aminoacyl-tRNA synthetase</keyword>
<keyword id="KW-0067">ATP-binding</keyword>
<keyword id="KW-0963">Cytoplasm</keyword>
<keyword id="KW-0436">Ligase</keyword>
<keyword id="KW-0547">Nucleotide-binding</keyword>
<keyword id="KW-0648">Protein biosynthesis</keyword>
<sequence>MSKKLTFQEIILTLQQFWNEQGCLLMQAYDTEKGAGTMSPYTFLRAIGPEPWNAAYVEPSRRPADGRYGENPNRLYQHHQFQVVMKPSPSNIQELYLESLERLGINPLEHDIRFVEDNWENPSTGSAGLGWEVWLDGMEITQFTYFQQVGGLATGPVTSEVTYSLERLASYIQEVDSVYDIEWADGVKYGEIFIQPEYEHSKYSFEVSDQDMLLENFTKFEKEAERALEEGLVHPAFDYVLKCSHTFNLLDARGAVSVTERAGYIARIRNLARVVAKTFVAERKKLGFPLLDEATRAELLKEDAE</sequence>
<dbReference type="EC" id="6.1.1.14" evidence="1"/>
<dbReference type="EMBL" id="CP000407">
    <property type="protein sequence ID" value="ABP90731.1"/>
    <property type="molecule type" value="Genomic_DNA"/>
</dbReference>
<dbReference type="SMR" id="A4VX92"/>
<dbReference type="STRING" id="391295.SSU05_1765"/>
<dbReference type="KEGG" id="ssu:SSU05_1765"/>
<dbReference type="eggNOG" id="COG0752">
    <property type="taxonomic scope" value="Bacteria"/>
</dbReference>
<dbReference type="HOGENOM" id="CLU_057066_1_0_9"/>
<dbReference type="GO" id="GO:0005829">
    <property type="term" value="C:cytosol"/>
    <property type="evidence" value="ECO:0007669"/>
    <property type="project" value="TreeGrafter"/>
</dbReference>
<dbReference type="GO" id="GO:0005524">
    <property type="term" value="F:ATP binding"/>
    <property type="evidence" value="ECO:0007669"/>
    <property type="project" value="UniProtKB-UniRule"/>
</dbReference>
<dbReference type="GO" id="GO:0140096">
    <property type="term" value="F:catalytic activity, acting on a protein"/>
    <property type="evidence" value="ECO:0007669"/>
    <property type="project" value="UniProtKB-ARBA"/>
</dbReference>
<dbReference type="GO" id="GO:0004820">
    <property type="term" value="F:glycine-tRNA ligase activity"/>
    <property type="evidence" value="ECO:0007669"/>
    <property type="project" value="UniProtKB-UniRule"/>
</dbReference>
<dbReference type="GO" id="GO:0016740">
    <property type="term" value="F:transferase activity"/>
    <property type="evidence" value="ECO:0007669"/>
    <property type="project" value="UniProtKB-ARBA"/>
</dbReference>
<dbReference type="GO" id="GO:0006426">
    <property type="term" value="P:glycyl-tRNA aminoacylation"/>
    <property type="evidence" value="ECO:0007669"/>
    <property type="project" value="UniProtKB-UniRule"/>
</dbReference>
<dbReference type="CDD" id="cd00733">
    <property type="entry name" value="GlyRS_alpha_core"/>
    <property type="match status" value="1"/>
</dbReference>
<dbReference type="FunFam" id="3.30.930.10:FF:000006">
    <property type="entry name" value="Glycine--tRNA ligase alpha subunit"/>
    <property type="match status" value="1"/>
</dbReference>
<dbReference type="Gene3D" id="3.30.930.10">
    <property type="entry name" value="Bira Bifunctional Protein, Domain 2"/>
    <property type="match status" value="1"/>
</dbReference>
<dbReference type="Gene3D" id="1.20.58.180">
    <property type="entry name" value="Class II aaRS and biotin synthetases, domain 2"/>
    <property type="match status" value="1"/>
</dbReference>
<dbReference type="HAMAP" id="MF_00254">
    <property type="entry name" value="Gly_tRNA_synth_alpha"/>
    <property type="match status" value="1"/>
</dbReference>
<dbReference type="InterPro" id="IPR045864">
    <property type="entry name" value="aa-tRNA-synth_II/BPL/LPL"/>
</dbReference>
<dbReference type="InterPro" id="IPR006194">
    <property type="entry name" value="Gly-tRNA-synth_heterodimer"/>
</dbReference>
<dbReference type="InterPro" id="IPR002310">
    <property type="entry name" value="Gly-tRNA_ligase_asu"/>
</dbReference>
<dbReference type="NCBIfam" id="TIGR00388">
    <property type="entry name" value="glyQ"/>
    <property type="match status" value="1"/>
</dbReference>
<dbReference type="NCBIfam" id="NF006827">
    <property type="entry name" value="PRK09348.1"/>
    <property type="match status" value="1"/>
</dbReference>
<dbReference type="PANTHER" id="PTHR30075:SF2">
    <property type="entry name" value="GLYCINE--TRNA LIGASE, CHLOROPLASTIC_MITOCHONDRIAL 2"/>
    <property type="match status" value="1"/>
</dbReference>
<dbReference type="PANTHER" id="PTHR30075">
    <property type="entry name" value="GLYCYL-TRNA SYNTHETASE"/>
    <property type="match status" value="1"/>
</dbReference>
<dbReference type="Pfam" id="PF02091">
    <property type="entry name" value="tRNA-synt_2e"/>
    <property type="match status" value="1"/>
</dbReference>
<dbReference type="PRINTS" id="PR01044">
    <property type="entry name" value="TRNASYNTHGA"/>
</dbReference>
<dbReference type="SUPFAM" id="SSF55681">
    <property type="entry name" value="Class II aaRS and biotin synthetases"/>
    <property type="match status" value="1"/>
</dbReference>
<dbReference type="PROSITE" id="PS50861">
    <property type="entry name" value="AA_TRNA_LIGASE_II_GLYAB"/>
    <property type="match status" value="1"/>
</dbReference>
<protein>
    <recommendedName>
        <fullName evidence="1">Glycine--tRNA ligase alpha subunit</fullName>
        <ecNumber evidence="1">6.1.1.14</ecNumber>
    </recommendedName>
    <alternativeName>
        <fullName evidence="1">Glycyl-tRNA synthetase alpha subunit</fullName>
        <shortName evidence="1">GlyRS</shortName>
    </alternativeName>
</protein>
<gene>
    <name evidence="1" type="primary">glyQ</name>
    <name type="ordered locus">SSU05_1765</name>
</gene>